<proteinExistence type="inferred from homology"/>
<evidence type="ECO:0000250" key="1"/>
<evidence type="ECO:0000255" key="2">
    <source>
        <dbReference type="HAMAP-Rule" id="MF_00100"/>
    </source>
</evidence>
<evidence type="ECO:0000256" key="3">
    <source>
        <dbReference type="SAM" id="MobiDB-lite"/>
    </source>
</evidence>
<reference key="1">
    <citation type="submission" date="2007-06" db="EMBL/GenBank/DDBJ databases">
        <title>Complete sequence of Marinomonas sp. MWYL1.</title>
        <authorList>
            <consortium name="US DOE Joint Genome Institute"/>
            <person name="Copeland A."/>
            <person name="Lucas S."/>
            <person name="Lapidus A."/>
            <person name="Barry K."/>
            <person name="Glavina del Rio T."/>
            <person name="Dalin E."/>
            <person name="Tice H."/>
            <person name="Pitluck S."/>
            <person name="Kiss H."/>
            <person name="Brettin T."/>
            <person name="Bruce D."/>
            <person name="Detter J.C."/>
            <person name="Han C."/>
            <person name="Schmutz J."/>
            <person name="Larimer F."/>
            <person name="Land M."/>
            <person name="Hauser L."/>
            <person name="Kyrpides N."/>
            <person name="Kim E."/>
            <person name="Johnston A.W.B."/>
            <person name="Todd J.D."/>
            <person name="Rogers R."/>
            <person name="Wexler M."/>
            <person name="Bond P.L."/>
            <person name="Li Y."/>
            <person name="Richardson P."/>
        </authorList>
    </citation>
    <scope>NUCLEOTIDE SEQUENCE [LARGE SCALE GENOMIC DNA]</scope>
    <source>
        <strain>MWYL1</strain>
    </source>
</reference>
<sequence>MTVQTVKILSELVSTPVDKLLAQMKDAGLPQTSASQEVSEVEKQVLLSYLKRQHGEEGDNSQRITLQRKTTSTLSRDGGKAVNVAVKKKRTYVKRDDEEAQKQEELAKRLAEEQERLAQEKARLELERKQEEEKAAKAKAEAEEKARQEAAVKNVVADAGAVNETEQYVSDTGAAEPVESPKQPKASKKVSQPAMDSKKSTVAPKGKKGPVRHDNDKDKDKPRGRVNPDNKRTSRVNVNDEDEFTRRGKLGRKNKKPSKQEHGFQKPTAKMIHEVALPESITVADLAEKMAVKGAEVIKIMFKMGAMATINQTIDRDTATLVVEEMGHTVKFIDENAVENDMIEAIDYQGEAIKRAPVVTVMGHVDHGKTSLLDYIRTTRVAAGESGGITQHIGAYHVETPHGMISFLDTPGHAAFTSMRARGAKATDIVILVCAADDGVMPQTIEAIQHARAAGVPMVVAMTKIDKEGADIDRVKNELVAQEVVPEEWGGDIQFVGVSAKSGEGIEALLEAVLLQAEVLELTAVPSAPAKGVVVEARLDRGRGSVATLLVQNGTLKKGDIVLAGLQMGRVRALLDETGKAIDSAGPSIPVEILGLDGTPEAGEEFIVVADERKAREVANFRQGKYREVRFARQHSAKLENLFSEMGKDEVRTLNVVLKADVRGSLEALIKSLTDMNTDEVKVNVVSSGVGGITETDATLALASDAVIFGFNVRADNSAKQFIERESIDLRYYSVIYNIIDDVKSALSGMLSPDLREDIKGTAEVRDVFRSPKFGLIAGCMVIEGTVYRNKQIRVLRDDVVIYEGELESLRRFKDAVNEVSRGMECGIGVKNYNDVKVGDKIEVFETVEVARTL</sequence>
<dbReference type="EMBL" id="CP000749">
    <property type="protein sequence ID" value="ABR69958.1"/>
    <property type="molecule type" value="Genomic_DNA"/>
</dbReference>
<dbReference type="SMR" id="A6VU29"/>
<dbReference type="STRING" id="400668.Mmwyl1_1027"/>
<dbReference type="KEGG" id="mmw:Mmwyl1_1027"/>
<dbReference type="eggNOG" id="COG0532">
    <property type="taxonomic scope" value="Bacteria"/>
</dbReference>
<dbReference type="HOGENOM" id="CLU_006301_6_2_6"/>
<dbReference type="OrthoDB" id="9811804at2"/>
<dbReference type="GO" id="GO:0005829">
    <property type="term" value="C:cytosol"/>
    <property type="evidence" value="ECO:0007669"/>
    <property type="project" value="TreeGrafter"/>
</dbReference>
<dbReference type="GO" id="GO:0005525">
    <property type="term" value="F:GTP binding"/>
    <property type="evidence" value="ECO:0007669"/>
    <property type="project" value="UniProtKB-KW"/>
</dbReference>
<dbReference type="GO" id="GO:0003924">
    <property type="term" value="F:GTPase activity"/>
    <property type="evidence" value="ECO:0007669"/>
    <property type="project" value="UniProtKB-UniRule"/>
</dbReference>
<dbReference type="GO" id="GO:0003743">
    <property type="term" value="F:translation initiation factor activity"/>
    <property type="evidence" value="ECO:0007669"/>
    <property type="project" value="UniProtKB-UniRule"/>
</dbReference>
<dbReference type="CDD" id="cd01887">
    <property type="entry name" value="IF2_eIF5B"/>
    <property type="match status" value="1"/>
</dbReference>
<dbReference type="CDD" id="cd03702">
    <property type="entry name" value="IF2_mtIF2_II"/>
    <property type="match status" value="1"/>
</dbReference>
<dbReference type="CDD" id="cd03692">
    <property type="entry name" value="mtIF2_IVc"/>
    <property type="match status" value="1"/>
</dbReference>
<dbReference type="FunFam" id="2.40.30.10:FF:000007">
    <property type="entry name" value="Translation initiation factor IF-2"/>
    <property type="match status" value="1"/>
</dbReference>
<dbReference type="FunFam" id="2.40.30.10:FF:000008">
    <property type="entry name" value="Translation initiation factor IF-2"/>
    <property type="match status" value="1"/>
</dbReference>
<dbReference type="FunFam" id="3.40.50.10050:FF:000001">
    <property type="entry name" value="Translation initiation factor IF-2"/>
    <property type="match status" value="1"/>
</dbReference>
<dbReference type="FunFam" id="3.40.50.300:FF:000019">
    <property type="entry name" value="Translation initiation factor IF-2"/>
    <property type="match status" value="1"/>
</dbReference>
<dbReference type="Gene3D" id="3.40.50.300">
    <property type="entry name" value="P-loop containing nucleotide triphosphate hydrolases"/>
    <property type="match status" value="1"/>
</dbReference>
<dbReference type="Gene3D" id="3.30.56.50">
    <property type="entry name" value="Putative DNA-binding domain, N-terminal subdomain of bacterial translation initiation factor IF2"/>
    <property type="match status" value="1"/>
</dbReference>
<dbReference type="Gene3D" id="2.40.30.10">
    <property type="entry name" value="Translation factors"/>
    <property type="match status" value="2"/>
</dbReference>
<dbReference type="Gene3D" id="3.40.50.10050">
    <property type="entry name" value="Translation initiation factor IF- 2, domain 3"/>
    <property type="match status" value="1"/>
</dbReference>
<dbReference type="HAMAP" id="MF_00100_B">
    <property type="entry name" value="IF_2_B"/>
    <property type="match status" value="1"/>
</dbReference>
<dbReference type="InterPro" id="IPR009061">
    <property type="entry name" value="DNA-bd_dom_put_sf"/>
</dbReference>
<dbReference type="InterPro" id="IPR053905">
    <property type="entry name" value="EF-G-like_DII"/>
</dbReference>
<dbReference type="InterPro" id="IPR013575">
    <property type="entry name" value="IF2_assoc_dom_bac"/>
</dbReference>
<dbReference type="InterPro" id="IPR044145">
    <property type="entry name" value="IF2_II"/>
</dbReference>
<dbReference type="InterPro" id="IPR006847">
    <property type="entry name" value="IF2_N"/>
</dbReference>
<dbReference type="InterPro" id="IPR027417">
    <property type="entry name" value="P-loop_NTPase"/>
</dbReference>
<dbReference type="InterPro" id="IPR005225">
    <property type="entry name" value="Small_GTP-bd"/>
</dbReference>
<dbReference type="InterPro" id="IPR000795">
    <property type="entry name" value="T_Tr_GTP-bd_dom"/>
</dbReference>
<dbReference type="InterPro" id="IPR000178">
    <property type="entry name" value="TF_IF2_bacterial-like"/>
</dbReference>
<dbReference type="InterPro" id="IPR015760">
    <property type="entry name" value="TIF_IF2"/>
</dbReference>
<dbReference type="InterPro" id="IPR023115">
    <property type="entry name" value="TIF_IF2_dom3"/>
</dbReference>
<dbReference type="InterPro" id="IPR036925">
    <property type="entry name" value="TIF_IF2_dom3_sf"/>
</dbReference>
<dbReference type="InterPro" id="IPR009000">
    <property type="entry name" value="Transl_B-barrel_sf"/>
</dbReference>
<dbReference type="NCBIfam" id="TIGR00487">
    <property type="entry name" value="IF-2"/>
    <property type="match status" value="1"/>
</dbReference>
<dbReference type="NCBIfam" id="TIGR00231">
    <property type="entry name" value="small_GTP"/>
    <property type="match status" value="1"/>
</dbReference>
<dbReference type="PANTHER" id="PTHR43381:SF5">
    <property type="entry name" value="TR-TYPE G DOMAIN-CONTAINING PROTEIN"/>
    <property type="match status" value="1"/>
</dbReference>
<dbReference type="PANTHER" id="PTHR43381">
    <property type="entry name" value="TRANSLATION INITIATION FACTOR IF-2-RELATED"/>
    <property type="match status" value="1"/>
</dbReference>
<dbReference type="Pfam" id="PF22042">
    <property type="entry name" value="EF-G_D2"/>
    <property type="match status" value="1"/>
</dbReference>
<dbReference type="Pfam" id="PF00009">
    <property type="entry name" value="GTP_EFTU"/>
    <property type="match status" value="1"/>
</dbReference>
<dbReference type="Pfam" id="PF11987">
    <property type="entry name" value="IF-2"/>
    <property type="match status" value="1"/>
</dbReference>
<dbReference type="Pfam" id="PF08364">
    <property type="entry name" value="IF2_assoc"/>
    <property type="match status" value="1"/>
</dbReference>
<dbReference type="Pfam" id="PF04760">
    <property type="entry name" value="IF2_N"/>
    <property type="match status" value="1"/>
</dbReference>
<dbReference type="SUPFAM" id="SSF52156">
    <property type="entry name" value="Initiation factor IF2/eIF5b, domain 3"/>
    <property type="match status" value="1"/>
</dbReference>
<dbReference type="SUPFAM" id="SSF52540">
    <property type="entry name" value="P-loop containing nucleoside triphosphate hydrolases"/>
    <property type="match status" value="1"/>
</dbReference>
<dbReference type="SUPFAM" id="SSF46955">
    <property type="entry name" value="Putative DNA-binding domain"/>
    <property type="match status" value="1"/>
</dbReference>
<dbReference type="SUPFAM" id="SSF50447">
    <property type="entry name" value="Translation proteins"/>
    <property type="match status" value="2"/>
</dbReference>
<dbReference type="PROSITE" id="PS51722">
    <property type="entry name" value="G_TR_2"/>
    <property type="match status" value="1"/>
</dbReference>
<dbReference type="PROSITE" id="PS01176">
    <property type="entry name" value="IF2"/>
    <property type="match status" value="1"/>
</dbReference>
<keyword id="KW-0963">Cytoplasm</keyword>
<keyword id="KW-0342">GTP-binding</keyword>
<keyword id="KW-0396">Initiation factor</keyword>
<keyword id="KW-0547">Nucleotide-binding</keyword>
<keyword id="KW-0648">Protein biosynthesis</keyword>
<accession>A6VU29</accession>
<name>IF2_MARMS</name>
<comment type="function">
    <text evidence="2">One of the essential components for the initiation of protein synthesis. Protects formylmethionyl-tRNA from spontaneous hydrolysis and promotes its binding to the 30S ribosomal subunits. Also involved in the hydrolysis of GTP during the formation of the 70S ribosomal complex.</text>
</comment>
<comment type="subcellular location">
    <subcellularLocation>
        <location evidence="2">Cytoplasm</location>
    </subcellularLocation>
</comment>
<comment type="similarity">
    <text evidence="2">Belongs to the TRAFAC class translation factor GTPase superfamily. Classic translation factor GTPase family. IF-2 subfamily.</text>
</comment>
<feature type="chain" id="PRO_0000335490" description="Translation initiation factor IF-2">
    <location>
        <begin position="1"/>
        <end position="854"/>
    </location>
</feature>
<feature type="domain" description="tr-type G">
    <location>
        <begin position="354"/>
        <end position="523"/>
    </location>
</feature>
<feature type="region of interest" description="Disordered" evidence="3">
    <location>
        <begin position="52"/>
        <end position="79"/>
    </location>
</feature>
<feature type="region of interest" description="Disordered" evidence="3">
    <location>
        <begin position="128"/>
        <end position="265"/>
    </location>
</feature>
<feature type="region of interest" description="G1" evidence="1">
    <location>
        <begin position="363"/>
        <end position="370"/>
    </location>
</feature>
<feature type="region of interest" description="G2" evidence="1">
    <location>
        <begin position="388"/>
        <end position="392"/>
    </location>
</feature>
<feature type="region of interest" description="G3" evidence="1">
    <location>
        <begin position="409"/>
        <end position="412"/>
    </location>
</feature>
<feature type="region of interest" description="G4" evidence="1">
    <location>
        <begin position="463"/>
        <end position="466"/>
    </location>
</feature>
<feature type="region of interest" description="G5" evidence="1">
    <location>
        <begin position="499"/>
        <end position="501"/>
    </location>
</feature>
<feature type="compositionally biased region" description="Polar residues" evidence="3">
    <location>
        <begin position="61"/>
        <end position="75"/>
    </location>
</feature>
<feature type="compositionally biased region" description="Basic and acidic residues" evidence="3">
    <location>
        <begin position="128"/>
        <end position="150"/>
    </location>
</feature>
<feature type="compositionally biased region" description="Basic and acidic residues" evidence="3">
    <location>
        <begin position="211"/>
        <end position="232"/>
    </location>
</feature>
<feature type="compositionally biased region" description="Basic residues" evidence="3">
    <location>
        <begin position="247"/>
        <end position="257"/>
    </location>
</feature>
<feature type="binding site" evidence="2">
    <location>
        <begin position="363"/>
        <end position="370"/>
    </location>
    <ligand>
        <name>GTP</name>
        <dbReference type="ChEBI" id="CHEBI:37565"/>
    </ligand>
</feature>
<feature type="binding site" evidence="2">
    <location>
        <begin position="409"/>
        <end position="413"/>
    </location>
    <ligand>
        <name>GTP</name>
        <dbReference type="ChEBI" id="CHEBI:37565"/>
    </ligand>
</feature>
<gene>
    <name evidence="2" type="primary">infB</name>
    <name type="ordered locus">Mmwyl1_1027</name>
</gene>
<protein>
    <recommendedName>
        <fullName evidence="2">Translation initiation factor IF-2</fullName>
    </recommendedName>
</protein>
<organism>
    <name type="scientific">Marinomonas sp. (strain MWYL1)</name>
    <dbReference type="NCBI Taxonomy" id="400668"/>
    <lineage>
        <taxon>Bacteria</taxon>
        <taxon>Pseudomonadati</taxon>
        <taxon>Pseudomonadota</taxon>
        <taxon>Gammaproteobacteria</taxon>
        <taxon>Oceanospirillales</taxon>
        <taxon>Oceanospirillaceae</taxon>
        <taxon>Marinomonas</taxon>
    </lineage>
</organism>